<sequence>LVVELAPMEIR</sequence>
<organism>
    <name type="scientific">Capsicum annuum var. annuum</name>
    <name type="common">Red pepper</name>
    <dbReference type="NCBI Taxonomy" id="40321"/>
    <lineage>
        <taxon>Eukaryota</taxon>
        <taxon>Viridiplantae</taxon>
        <taxon>Streptophyta</taxon>
        <taxon>Embryophyta</taxon>
        <taxon>Tracheophyta</taxon>
        <taxon>Spermatophyta</taxon>
        <taxon>Magnoliopsida</taxon>
        <taxon>eudicotyledons</taxon>
        <taxon>Gunneridae</taxon>
        <taxon>Pentapetalae</taxon>
        <taxon>asterids</taxon>
        <taxon>lamiids</taxon>
        <taxon>Solanales</taxon>
        <taxon>Solanaceae</taxon>
        <taxon>Solanoideae</taxon>
        <taxon>Capsiceae</taxon>
        <taxon>Capsicum</taxon>
    </lineage>
</organism>
<proteinExistence type="evidence at protein level"/>
<protein>
    <recommendedName>
        <fullName>Unknown protein 1</fullName>
    </recommendedName>
</protein>
<name>UP01_CAPAA</name>
<feature type="chain" id="PRO_0000355603" description="Unknown protein 1">
    <location>
        <begin position="1" status="less than"/>
        <end position="11" status="greater than"/>
    </location>
</feature>
<feature type="unsure residue" description="L or I">
    <location>
        <position position="1"/>
    </location>
</feature>
<feature type="unsure residue" description="L or I">
    <location>
        <position position="5"/>
    </location>
</feature>
<feature type="unsure residue" description="M or F">
    <location>
        <position position="8"/>
    </location>
</feature>
<feature type="unsure residue" description="I or L">
    <location>
        <position position="10"/>
    </location>
</feature>
<feature type="non-terminal residue">
    <location>
        <position position="1"/>
    </location>
</feature>
<feature type="non-terminal residue">
    <location>
        <position position="11"/>
    </location>
</feature>
<accession>P86076</accession>
<keyword id="KW-0903">Direct protein sequencing</keyword>
<reference evidence="1" key="1">
    <citation type="submission" date="2008-07" db="UniProtKB">
        <authorList>
            <person name="Almagro L."/>
            <person name="Sabater Jara A.B."/>
            <person name="Pedreno M.A."/>
        </authorList>
    </citation>
    <scope>PROTEIN SEQUENCE</scope>
</reference>
<evidence type="ECO:0000305" key="1"/>